<dbReference type="EMBL" id="AB194950">
    <property type="protein sequence ID" value="BAE00090.1"/>
    <property type="molecule type" value="Genomic_DNA"/>
</dbReference>
<dbReference type="SMR" id="Q4R1S6"/>
<dbReference type="GlyCosmos" id="Q4R1S6">
    <property type="glycosylation" value="1 site, No reported glycans"/>
</dbReference>
<dbReference type="Proteomes" id="UP000007911">
    <property type="component" value="Genome"/>
</dbReference>
<dbReference type="GO" id="GO:0016020">
    <property type="term" value="C:membrane"/>
    <property type="evidence" value="ECO:0007669"/>
    <property type="project" value="UniProtKB-UniRule"/>
</dbReference>
<dbReference type="GO" id="GO:0019031">
    <property type="term" value="C:viral envelope"/>
    <property type="evidence" value="ECO:0007669"/>
    <property type="project" value="UniProtKB-KW"/>
</dbReference>
<dbReference type="GO" id="GO:0055036">
    <property type="term" value="C:virion membrane"/>
    <property type="evidence" value="ECO:0007669"/>
    <property type="project" value="UniProtKB-SubCell"/>
</dbReference>
<dbReference type="GO" id="GO:0075513">
    <property type="term" value="P:caveolin-mediated endocytosis of virus by host cell"/>
    <property type="evidence" value="ECO:0007669"/>
    <property type="project" value="UniProtKB-KW"/>
</dbReference>
<dbReference type="GO" id="GO:0039654">
    <property type="term" value="P:fusion of virus membrane with host endosome membrane"/>
    <property type="evidence" value="ECO:0007669"/>
    <property type="project" value="UniProtKB-KW"/>
</dbReference>
<dbReference type="GO" id="GO:0019062">
    <property type="term" value="P:virion attachment to host cell"/>
    <property type="evidence" value="ECO:0007669"/>
    <property type="project" value="UniProtKB-UniRule"/>
</dbReference>
<dbReference type="HAMAP" id="MF_04075">
    <property type="entry name" value="HBV_HBSAG"/>
    <property type="match status" value="1"/>
</dbReference>
<dbReference type="InterPro" id="IPR000349">
    <property type="entry name" value="HBV_HBSAG"/>
</dbReference>
<dbReference type="Pfam" id="PF00695">
    <property type="entry name" value="vMSA"/>
    <property type="match status" value="1"/>
</dbReference>
<evidence type="ECO:0000255" key="1">
    <source>
        <dbReference type="HAMAP-Rule" id="MF_04075"/>
    </source>
</evidence>
<evidence type="ECO:0000256" key="2">
    <source>
        <dbReference type="SAM" id="MobiDB-lite"/>
    </source>
</evidence>
<evidence type="ECO:0000305" key="3"/>
<feature type="initiator methionine" description="Removed; by host" evidence="1">
    <location>
        <position position="1"/>
    </location>
</feature>
<feature type="chain" id="PRO_0000319073" description="Large envelope protein" evidence="1">
    <location>
        <begin position="2"/>
        <end position="400"/>
    </location>
</feature>
<feature type="topological domain" description="Intravirion; in internal conformation" evidence="1">
    <location>
        <begin position="2"/>
        <end position="253"/>
    </location>
</feature>
<feature type="topological domain" description="Virion surface; in external conformation" evidence="1">
    <location>
        <begin position="2"/>
        <end position="181"/>
    </location>
</feature>
<feature type="transmembrane region" description="Helical; Name=TM1; Note=In external conformation" evidence="1">
    <location>
        <begin position="182"/>
        <end position="202"/>
    </location>
</feature>
<feature type="topological domain" description="Intravirion; in external conformation" evidence="1">
    <location>
        <begin position="203"/>
        <end position="253"/>
    </location>
</feature>
<feature type="transmembrane region" description="Helical; Name=TM2" evidence="1">
    <location>
        <begin position="254"/>
        <end position="274"/>
    </location>
</feature>
<feature type="topological domain" description="Virion surface" evidence="1">
    <location>
        <begin position="275"/>
        <end position="348"/>
    </location>
</feature>
<feature type="transmembrane region" description="Helical" evidence="1">
    <location>
        <begin position="349"/>
        <end position="369"/>
    </location>
</feature>
<feature type="topological domain" description="Intravirion" evidence="1">
    <location>
        <begin position="370"/>
        <end position="375"/>
    </location>
</feature>
<feature type="transmembrane region" description="Helical; Name=TM3" evidence="1">
    <location>
        <begin position="376"/>
        <end position="398"/>
    </location>
</feature>
<feature type="topological domain" description="Virion surface" evidence="1">
    <location>
        <begin position="399"/>
        <end position="400"/>
    </location>
</feature>
<feature type="region of interest" description="Pre-S" evidence="1">
    <location>
        <begin position="2"/>
        <end position="174"/>
    </location>
</feature>
<feature type="region of interest" description="Pre-S1" evidence="1">
    <location>
        <begin position="2"/>
        <end position="119"/>
    </location>
</feature>
<feature type="region of interest" description="Disordered" evidence="2">
    <location>
        <begin position="84"/>
        <end position="115"/>
    </location>
</feature>
<feature type="region of interest" description="Pre-S2" evidence="1">
    <location>
        <begin position="120"/>
        <end position="174"/>
    </location>
</feature>
<feature type="compositionally biased region" description="Polar residues" evidence="2">
    <location>
        <begin position="97"/>
        <end position="106"/>
    </location>
</feature>
<feature type="lipid moiety-binding region" description="N-myristoyl glycine; by host" evidence="1">
    <location>
        <position position="2"/>
    </location>
</feature>
<feature type="glycosylation site" description="N-linked (GlcNAc...) asparagine; by host" evidence="1">
    <location>
        <position position="320"/>
    </location>
</feature>
<feature type="splice variant" id="VSP_031364" description="In isoform S." evidence="3">
    <location>
        <begin position="1"/>
        <end position="174"/>
    </location>
</feature>
<gene>
    <name evidence="1" type="primary">S</name>
</gene>
<proteinExistence type="evidence at protein level"/>
<reference key="1">
    <citation type="journal article" date="2005" name="J. Gen. Virol.">
        <title>A new subtype (subgenotype) Ac (A3) of hepatitis B virus and recombination between genotypes A and E in Cameroon.</title>
        <authorList>
            <person name="Kurbanov F."/>
            <person name="Tanaka Y."/>
            <person name="Fujiwara K."/>
            <person name="Sugauchi F."/>
            <person name="Mbanya D."/>
            <person name="Zekeng L."/>
            <person name="Ndembi N."/>
            <person name="Ngansop C."/>
            <person name="Kaptue L."/>
            <person name="Miura T."/>
            <person name="Ido E."/>
            <person name="Hayami M."/>
            <person name="Ichimura H."/>
            <person name="Mizokami M."/>
        </authorList>
    </citation>
    <scope>NUCLEOTIDE SEQUENCE [GENOMIC DNA]</scope>
</reference>
<reference key="2">
    <citation type="journal article" date="1996" name="Intervirology">
        <title>Functions of the large hepatitis B virus surface protein in viral particle morphogenesis.</title>
        <authorList>
            <person name="Bruss V."/>
            <person name="Gerhardt E."/>
            <person name="Vieluf K."/>
            <person name="Wunderlich G."/>
        </authorList>
    </citation>
    <scope>REVIEW</scope>
</reference>
<reference key="3">
    <citation type="journal article" date="1998" name="Adv. Exp. Med. Biol.">
        <title>Role of glycan processing in hepatitis B virus envelope protein trafficking.</title>
        <authorList>
            <person name="Block T.M."/>
            <person name="Lu X."/>
            <person name="Mehta A."/>
            <person name="Park J."/>
            <person name="Blumberg B.S."/>
            <person name="Dwek R."/>
        </authorList>
    </citation>
    <scope>REVIEW</scope>
</reference>
<reference key="4">
    <citation type="journal article" date="2004" name="Virus Res.">
        <title>Envelopment of the hepatitis B virus nucleocapsid.</title>
        <authorList>
            <person name="Bruss V."/>
        </authorList>
    </citation>
    <scope>REVIEW</scope>
</reference>
<reference key="5">
    <citation type="journal article" date="2006" name="Cancer Sci.">
        <title>Hepatitis B virus pre-S mutants, endoplasmic reticulum stress and hepatocarcinogenesis.</title>
        <authorList>
            <person name="Wang H.C."/>
            <person name="Huang W."/>
            <person name="Lai M.D."/>
            <person name="Su I.J."/>
        </authorList>
    </citation>
    <scope>REVIEW</scope>
</reference>
<protein>
    <recommendedName>
        <fullName evidence="1">Large envelope protein</fullName>
    </recommendedName>
    <alternativeName>
        <fullName evidence="1">L glycoprotein</fullName>
    </alternativeName>
    <alternativeName>
        <fullName evidence="1">L-HBsAg</fullName>
        <shortName evidence="1">LHB</shortName>
    </alternativeName>
    <alternativeName>
        <fullName evidence="1">Large S protein</fullName>
    </alternativeName>
    <alternativeName>
        <fullName evidence="1">Large surface protein</fullName>
    </alternativeName>
    <alternativeName>
        <fullName evidence="1">Major surface antigen</fullName>
    </alternativeName>
</protein>
<accession>Q4R1S6</accession>
<sequence length="400" mass="43771">MGGWLPKPRKGMGTNLSVPNPLGFFPDHQLDPAFGANSNNPDWDFNPIKDHWPQANQVGVGAFGPGFTPPHGGVLGWSPQAQGTLTTVPAVPPPASANRQSGRQPTPISPPLRDSHPQAIKWNSPAFHQALQDPRVKGLYFPAGGSSSGTVSPVPNIASHISSISSRTGDPAPTMENITSGFLGPLLVLQAGFFLLTRILTIPQSLDSWWTSLNFLGGSPVCLGQNSQSPTSNHSPTSCPPICPGYRWMCLRRFIIFLFILLLCLIFLLVLLDYQGMLPVCPLIPGSTTTSTGPCRTCTTPAQGNSMFPSCCCTKPTDGNCTCIPIPSSWAFAKYLWEWASVRFSWLSLLVPFVQWFVGLSPTVWLSVIWMMWYWGPRLYNILSPFIPLLPIFFCLWVYI</sequence>
<keyword id="KW-0007">Acetylation</keyword>
<keyword id="KW-0024">Alternative initiation</keyword>
<keyword id="KW-0025">Alternative splicing</keyword>
<keyword id="KW-1166">Caveolin-mediated endocytosis of virus by host</keyword>
<keyword id="KW-1170">Fusion of virus membrane with host endosomal membrane</keyword>
<keyword id="KW-1168">Fusion of virus membrane with host membrane</keyword>
<keyword id="KW-0325">Glycoprotein</keyword>
<keyword id="KW-0945">Host-virus interaction</keyword>
<keyword id="KW-0449">Lipoprotein</keyword>
<keyword id="KW-0472">Membrane</keyword>
<keyword id="KW-0519">Myristate</keyword>
<keyword id="KW-0812">Transmembrane</keyword>
<keyword id="KW-1133">Transmembrane helix</keyword>
<keyword id="KW-1161">Viral attachment to host cell</keyword>
<keyword id="KW-0261">Viral envelope protein</keyword>
<keyword id="KW-1162">Viral penetration into host cytoplasm</keyword>
<keyword id="KW-0946">Virion</keyword>
<keyword id="KW-1164">Virus endocytosis by host</keyword>
<keyword id="KW-1160">Virus entry into host cell</keyword>
<organism>
    <name type="scientific">Hepatitis B virus genotype A3 (isolate Cameroon/CMR983/1994)</name>
    <name type="common">HBV-A</name>
    <dbReference type="NCBI Taxonomy" id="489458"/>
    <lineage>
        <taxon>Viruses</taxon>
        <taxon>Riboviria</taxon>
        <taxon>Pararnavirae</taxon>
        <taxon>Artverviricota</taxon>
        <taxon>Revtraviricetes</taxon>
        <taxon>Blubervirales</taxon>
        <taxon>Hepadnaviridae</taxon>
        <taxon>Orthohepadnavirus</taxon>
        <taxon>Hepatitis B virus</taxon>
    </lineage>
</organism>
<organismHost>
    <name type="scientific">Homo sapiens</name>
    <name type="common">Human</name>
    <dbReference type="NCBI Taxonomy" id="9606"/>
</organismHost>
<organismHost>
    <name type="scientific">Pan troglodytes</name>
    <name type="common">Chimpanzee</name>
    <dbReference type="NCBI Taxonomy" id="9598"/>
</organismHost>
<comment type="function">
    <text evidence="1">The large envelope protein exists in two topological conformations, one which is termed 'external' or Le-HBsAg and the other 'internal' or Li-HBsAg. In its external conformation the protein attaches the virus to cell receptors and thereby initiating infection. This interaction determines the species specificity and liver tropism. This attachment induces virion internalization predominantly through caveolin-mediated endocytosis. The large envelope protein also assures fusion between virion membrane and endosomal membrane. In its internal conformation the protein plays a role in virion morphogenesis and mediates the contact with the nucleocapsid like a matrix protein.</text>
</comment>
<comment type="function">
    <text evidence="1">The middle envelope protein plays an important role in the budding of the virion. It is involved in the induction of budding in a nucleocapsid independent way. In this process the majority of envelope proteins bud to form subviral lipoprotein particles of 22 nm of diameter that do not contain a nucleocapsid.</text>
</comment>
<comment type="subunit">
    <text evidence="1">Li-HBsAg interacts with capsid protein and with HDV Large delta antigen. Isoform M associates with host chaperone CANX through its pre-S2 N glycan. This association may be essential for M proper secretion.</text>
</comment>
<comment type="subcellular location">
    <subcellularLocation>
        <location evidence="1">Virion membrane</location>
    </subcellularLocation>
</comment>
<comment type="alternative products">
    <event type="alternative splicing"/>
    <event type="alternative initiation"/>
    <isoform>
        <id>Q4R1S6-1</id>
        <name>L</name>
        <name>Large envelope protein</name>
        <name>LHB</name>
        <name>L-HBsAg</name>
        <sequence type="displayed"/>
    </isoform>
    <isoform>
        <id>Q4R1S6-2</id>
        <name>S</name>
        <name>Small envelope protein</name>
        <name>SHB</name>
        <name>S-HBsAg</name>
        <sequence type="described" ref="VSP_031364"/>
    </isoform>
</comment>
<comment type="domain">
    <text>The large envelope protein is synthesized with the pre-S region at the cytosolic side of the endoplasmic reticulum and, hence will be within the virion after budding. Therefore the pre-S region is not N-glycosylated. Later a post-translational translocation of N-terminal pre-S and TM1 domains occur in about 50% of proteins at the virion surface. These molecules change their topology by an unknown mechanism, resulting in exposure of pre-S region at virion surface.</text>
</comment>
<comment type="domain">
    <text evidence="1">The large envelope protein is synthesized with the pre-S region at the cytosolic side of the endoplasmic reticulum and, hence will be within the virion after budding. Therefore the pre-S region is not N-glycosylated. Later a post-translational translocation of N-terminal pre-S and TM1 domains occur in about 50% of proteins at the virion surface. These molecules change their topology by an unknown mechanism, resulting in exposure of pre-S region at virion surface. For isoform M in contrast, the pre-S2 region is translocated cotranslationally to the endoplasmic reticulum lumen and is N-glycosylated.</text>
</comment>
<comment type="PTM">
    <text evidence="1">Isoform M is N-terminally acetylated by host at a ratio of 90%, and N-glycosylated by host at the pre-S2 region.</text>
</comment>
<comment type="PTM">
    <text evidence="1">Myristoylated.</text>
</comment>
<comment type="biotechnology">
    <text>Systematic vaccination of individuals at risk of exposure to the virus has been the main method of controlling the morbidity and mortality associated with hepatitis B. The first hepatitis B vaccine was manufactured by the purification and inactivation of HBsAg obtained from the plasma of chronic hepatitis B virus carriers. The vaccine is now produced by recombinant DNA techniques and expression of the S isoform in yeast cells. The pre-S region do not seem to induce strong enough antigenic response.</text>
</comment>
<comment type="similarity">
    <text evidence="1">Belongs to the orthohepadnavirus major surface antigen family.</text>
</comment>
<name>HBSAG_HBVA8</name>